<accession>Q39XZ2</accession>
<feature type="chain" id="PRO_0000228862" description="Small ribosomal subunit protein uS8">
    <location>
        <begin position="1"/>
        <end position="132"/>
    </location>
</feature>
<sequence>MSMTDPIADMLTRIRNASMAKLQKVDIPSSNLKVSLANVLKAEGFIKNFKVIADNKQGVLRVYLRFIDEKEPVIREIKRVSKPGSRVYVGSDEIPSVKSGMGVAILSTSKGILTDKVAREAGVGGEVICTVW</sequence>
<gene>
    <name evidence="1" type="primary">rpsH</name>
    <name type="ordered locus">Gmet_0640</name>
</gene>
<organism>
    <name type="scientific">Geobacter metallireducens (strain ATCC 53774 / DSM 7210 / GS-15)</name>
    <dbReference type="NCBI Taxonomy" id="269799"/>
    <lineage>
        <taxon>Bacteria</taxon>
        <taxon>Pseudomonadati</taxon>
        <taxon>Thermodesulfobacteriota</taxon>
        <taxon>Desulfuromonadia</taxon>
        <taxon>Geobacterales</taxon>
        <taxon>Geobacteraceae</taxon>
        <taxon>Geobacter</taxon>
    </lineage>
</organism>
<proteinExistence type="inferred from homology"/>
<dbReference type="EMBL" id="CP000148">
    <property type="protein sequence ID" value="ABB30882.1"/>
    <property type="molecule type" value="Genomic_DNA"/>
</dbReference>
<dbReference type="RefSeq" id="WP_004514250.1">
    <property type="nucleotide sequence ID" value="NC_007517.1"/>
</dbReference>
<dbReference type="SMR" id="Q39XZ2"/>
<dbReference type="STRING" id="269799.Gmet_0640"/>
<dbReference type="KEGG" id="gme:Gmet_0640"/>
<dbReference type="eggNOG" id="COG0096">
    <property type="taxonomic scope" value="Bacteria"/>
</dbReference>
<dbReference type="HOGENOM" id="CLU_098428_0_2_7"/>
<dbReference type="Proteomes" id="UP000007073">
    <property type="component" value="Chromosome"/>
</dbReference>
<dbReference type="GO" id="GO:1990904">
    <property type="term" value="C:ribonucleoprotein complex"/>
    <property type="evidence" value="ECO:0007669"/>
    <property type="project" value="UniProtKB-KW"/>
</dbReference>
<dbReference type="GO" id="GO:0005840">
    <property type="term" value="C:ribosome"/>
    <property type="evidence" value="ECO:0007669"/>
    <property type="project" value="UniProtKB-KW"/>
</dbReference>
<dbReference type="GO" id="GO:0019843">
    <property type="term" value="F:rRNA binding"/>
    <property type="evidence" value="ECO:0007669"/>
    <property type="project" value="UniProtKB-UniRule"/>
</dbReference>
<dbReference type="GO" id="GO:0003735">
    <property type="term" value="F:structural constituent of ribosome"/>
    <property type="evidence" value="ECO:0007669"/>
    <property type="project" value="InterPro"/>
</dbReference>
<dbReference type="GO" id="GO:0006412">
    <property type="term" value="P:translation"/>
    <property type="evidence" value="ECO:0007669"/>
    <property type="project" value="UniProtKB-UniRule"/>
</dbReference>
<dbReference type="FunFam" id="3.30.1370.30:FF:000002">
    <property type="entry name" value="30S ribosomal protein S8"/>
    <property type="match status" value="1"/>
</dbReference>
<dbReference type="FunFam" id="3.30.1490.10:FF:000001">
    <property type="entry name" value="30S ribosomal protein S8"/>
    <property type="match status" value="1"/>
</dbReference>
<dbReference type="Gene3D" id="3.30.1370.30">
    <property type="match status" value="1"/>
</dbReference>
<dbReference type="Gene3D" id="3.30.1490.10">
    <property type="match status" value="1"/>
</dbReference>
<dbReference type="HAMAP" id="MF_01302_B">
    <property type="entry name" value="Ribosomal_uS8_B"/>
    <property type="match status" value="1"/>
</dbReference>
<dbReference type="InterPro" id="IPR000630">
    <property type="entry name" value="Ribosomal_uS8"/>
</dbReference>
<dbReference type="InterPro" id="IPR047863">
    <property type="entry name" value="Ribosomal_uS8_CS"/>
</dbReference>
<dbReference type="InterPro" id="IPR035987">
    <property type="entry name" value="Ribosomal_uS8_sf"/>
</dbReference>
<dbReference type="NCBIfam" id="NF001109">
    <property type="entry name" value="PRK00136.1"/>
    <property type="match status" value="1"/>
</dbReference>
<dbReference type="PANTHER" id="PTHR11758">
    <property type="entry name" value="40S RIBOSOMAL PROTEIN S15A"/>
    <property type="match status" value="1"/>
</dbReference>
<dbReference type="Pfam" id="PF00410">
    <property type="entry name" value="Ribosomal_S8"/>
    <property type="match status" value="1"/>
</dbReference>
<dbReference type="SUPFAM" id="SSF56047">
    <property type="entry name" value="Ribosomal protein S8"/>
    <property type="match status" value="1"/>
</dbReference>
<dbReference type="PROSITE" id="PS00053">
    <property type="entry name" value="RIBOSOMAL_S8"/>
    <property type="match status" value="1"/>
</dbReference>
<protein>
    <recommendedName>
        <fullName evidence="1">Small ribosomal subunit protein uS8</fullName>
    </recommendedName>
    <alternativeName>
        <fullName evidence="2">30S ribosomal protein S8</fullName>
    </alternativeName>
</protein>
<comment type="function">
    <text evidence="1">One of the primary rRNA binding proteins, it binds directly to 16S rRNA central domain where it helps coordinate assembly of the platform of the 30S subunit.</text>
</comment>
<comment type="subunit">
    <text evidence="1">Part of the 30S ribosomal subunit. Contacts proteins S5 and S12.</text>
</comment>
<comment type="similarity">
    <text evidence="1">Belongs to the universal ribosomal protein uS8 family.</text>
</comment>
<evidence type="ECO:0000255" key="1">
    <source>
        <dbReference type="HAMAP-Rule" id="MF_01302"/>
    </source>
</evidence>
<evidence type="ECO:0000305" key="2"/>
<keyword id="KW-1185">Reference proteome</keyword>
<keyword id="KW-0687">Ribonucleoprotein</keyword>
<keyword id="KW-0689">Ribosomal protein</keyword>
<keyword id="KW-0694">RNA-binding</keyword>
<keyword id="KW-0699">rRNA-binding</keyword>
<name>RS8_GEOMG</name>
<reference key="1">
    <citation type="journal article" date="2009" name="BMC Microbiol.">
        <title>The genome sequence of Geobacter metallireducens: features of metabolism, physiology and regulation common and dissimilar to Geobacter sulfurreducens.</title>
        <authorList>
            <person name="Aklujkar M."/>
            <person name="Krushkal J."/>
            <person name="DiBartolo G."/>
            <person name="Lapidus A."/>
            <person name="Land M.L."/>
            <person name="Lovley D.R."/>
        </authorList>
    </citation>
    <scope>NUCLEOTIDE SEQUENCE [LARGE SCALE GENOMIC DNA]</scope>
    <source>
        <strain>ATCC 53774 / DSM 7210 / GS-15</strain>
    </source>
</reference>